<gene>
    <name evidence="1" type="primary">bamA</name>
    <name type="synonym">yaeT</name>
    <name type="ordered locus">YpsIP31758_1021</name>
</gene>
<comment type="function">
    <text evidence="1">Part of the outer membrane protein assembly complex, which is involved in assembly and insertion of beta-barrel proteins into the outer membrane. Constitutes, with BamD, the core component of the assembly machinery.</text>
</comment>
<comment type="subunit">
    <text evidence="1">Part of the Bam complex, which is composed of the outer membrane protein BamA, and four lipoproteins BamB, BamC, BamD and BamE.</text>
</comment>
<comment type="subcellular location">
    <subcellularLocation>
        <location evidence="1">Cell outer membrane</location>
    </subcellularLocation>
</comment>
<comment type="similarity">
    <text evidence="1">Belongs to the BamA family.</text>
</comment>
<feature type="signal peptide" evidence="1">
    <location>
        <begin position="1"/>
        <end position="20"/>
    </location>
</feature>
<feature type="chain" id="PRO_1000068525" description="Outer membrane protein assembly factor BamA">
    <location>
        <begin position="21"/>
        <end position="795"/>
    </location>
</feature>
<feature type="domain" description="POTRA 1" evidence="2">
    <location>
        <begin position="24"/>
        <end position="91"/>
    </location>
</feature>
<feature type="domain" description="POTRA 2" evidence="2">
    <location>
        <begin position="92"/>
        <end position="172"/>
    </location>
</feature>
<feature type="domain" description="POTRA 3" evidence="2">
    <location>
        <begin position="175"/>
        <end position="263"/>
    </location>
</feature>
<feature type="domain" description="POTRA 4" evidence="2">
    <location>
        <begin position="266"/>
        <end position="344"/>
    </location>
</feature>
<feature type="domain" description="POTRA 5" evidence="2">
    <location>
        <begin position="347"/>
        <end position="421"/>
    </location>
</feature>
<name>BAMA_YERP3</name>
<evidence type="ECO:0000255" key="1">
    <source>
        <dbReference type="HAMAP-Rule" id="MF_01430"/>
    </source>
</evidence>
<evidence type="ECO:0000255" key="2">
    <source>
        <dbReference type="PROSITE-ProRule" id="PRU01115"/>
    </source>
</evidence>
<reference key="1">
    <citation type="journal article" date="2007" name="PLoS Genet.">
        <title>The complete genome sequence of Yersinia pseudotuberculosis IP31758, the causative agent of Far East scarlet-like fever.</title>
        <authorList>
            <person name="Eppinger M."/>
            <person name="Rosovitz M.J."/>
            <person name="Fricke W.F."/>
            <person name="Rasko D.A."/>
            <person name="Kokorina G."/>
            <person name="Fayolle C."/>
            <person name="Lindler L.E."/>
            <person name="Carniel E."/>
            <person name="Ravel J."/>
        </authorList>
    </citation>
    <scope>NUCLEOTIDE SEQUENCE [LARGE SCALE GENOMIC DNA]</scope>
    <source>
        <strain>IP 31758</strain>
    </source>
</reference>
<organism>
    <name type="scientific">Yersinia pseudotuberculosis serotype O:1b (strain IP 31758)</name>
    <dbReference type="NCBI Taxonomy" id="349747"/>
    <lineage>
        <taxon>Bacteria</taxon>
        <taxon>Pseudomonadati</taxon>
        <taxon>Pseudomonadota</taxon>
        <taxon>Gammaproteobacteria</taxon>
        <taxon>Enterobacterales</taxon>
        <taxon>Yersiniaceae</taxon>
        <taxon>Yersinia</taxon>
    </lineage>
</organism>
<proteinExistence type="inferred from homology"/>
<protein>
    <recommendedName>
        <fullName evidence="1">Outer membrane protein assembly factor BamA</fullName>
    </recommendedName>
</protein>
<accession>A7FFH7</accession>
<sequence length="795" mass="87838">MAMKKLLIASLLFGSATVYGADGFVVNDIHFEGLQRVAVGAALLNMPVRVGDTVSDDDIGKTIRALFATGNFEDVRVLRDGNTLIVQVKERPTIASITFSGNKAVKEDMLKQNLEASGVRVGEALDRTTISNIEKGLEDFYYSVGKYSASVKAVVTPLPRNRVDLKLVFTEGVSAKIQQINIVGNHSFTTDELISRFQLRDEVPWWNVVGDRKYQKQKLAGDLETLRSFYLDRGYARFNIDSTQVSLTPDKKGIYVTINITEGPQFKLNSVIVSGNLAGHQSEAEKLTKIEPGELFNGSKVTRMEDDIKKMLGRYGYAYPRVVTQPEINDDDKTVKLHINVDAGNRFYVRHIRFEGNDTSKDSVLRREMRQMEGAWLGNDQVEAGKERLNRLGYFETVDVETQRVPGAADLVDVTYKVKERNTGSLNFGIGYGTESGVSFQVGVQQDNWLGTGNTVGINGTKNDYQTYAEFTLMDPYFTVDGVSLGGRIFYNDFKADNADLSGYTNSSYGADGTLGFPINENNSLRVGVGYVHNDLSDMLPQVAMWRYLESVGERPGYDGREGFTTDDFTLNLGWTYNNLDRGFFPTSGVKSSVNTKITVPGSDNEFYKVTFDTSAYQPLNEDRSWVLLGRGRLGYGDGIGSKEMPFYENFYAGGSSTVRGFRSNNIGPKAAYYANGGATVTNSTDAVGGNAMAVASIELITPTPFISEKYSNSVRTSIFIDSGTVWDTNWENTAKTRAAGIPDYGKASNIRVSAGVALQWMSPLGPLVFSYAKPVKDYEGDKSEQFQFNIGKTW</sequence>
<keyword id="KW-0998">Cell outer membrane</keyword>
<keyword id="KW-0472">Membrane</keyword>
<keyword id="KW-0677">Repeat</keyword>
<keyword id="KW-0732">Signal</keyword>
<keyword id="KW-0812">Transmembrane</keyword>
<keyword id="KW-1134">Transmembrane beta strand</keyword>
<dbReference type="EMBL" id="CP000720">
    <property type="protein sequence ID" value="ABS48841.1"/>
    <property type="molecule type" value="Genomic_DNA"/>
</dbReference>
<dbReference type="RefSeq" id="WP_002212139.1">
    <property type="nucleotide sequence ID" value="NC_009708.1"/>
</dbReference>
<dbReference type="SMR" id="A7FFH7"/>
<dbReference type="GeneID" id="57977509"/>
<dbReference type="KEGG" id="ypi:YpsIP31758_1021"/>
<dbReference type="HOGENOM" id="CLU_007664_1_0_6"/>
<dbReference type="Proteomes" id="UP000002412">
    <property type="component" value="Chromosome"/>
</dbReference>
<dbReference type="GO" id="GO:1990063">
    <property type="term" value="C:Bam protein complex"/>
    <property type="evidence" value="ECO:0007669"/>
    <property type="project" value="TreeGrafter"/>
</dbReference>
<dbReference type="GO" id="GO:0043165">
    <property type="term" value="P:Gram-negative-bacterium-type cell outer membrane assembly"/>
    <property type="evidence" value="ECO:0007669"/>
    <property type="project" value="UniProtKB-UniRule"/>
</dbReference>
<dbReference type="GO" id="GO:0051205">
    <property type="term" value="P:protein insertion into membrane"/>
    <property type="evidence" value="ECO:0007669"/>
    <property type="project" value="UniProtKB-UniRule"/>
</dbReference>
<dbReference type="FunFam" id="2.40.160.50:FF:000001">
    <property type="entry name" value="Outer membrane protein assembly factor BamA"/>
    <property type="match status" value="1"/>
</dbReference>
<dbReference type="FunFam" id="3.10.20.310:FF:000001">
    <property type="entry name" value="Outer membrane protein assembly factor BamA"/>
    <property type="match status" value="1"/>
</dbReference>
<dbReference type="FunFam" id="3.10.20.310:FF:000002">
    <property type="entry name" value="Outer membrane protein assembly factor BamA"/>
    <property type="match status" value="1"/>
</dbReference>
<dbReference type="FunFam" id="3.10.20.310:FF:000003">
    <property type="entry name" value="Outer membrane protein assembly factor BamA"/>
    <property type="match status" value="1"/>
</dbReference>
<dbReference type="FunFam" id="3.10.20.310:FF:000004">
    <property type="entry name" value="Outer membrane protein assembly factor BamA"/>
    <property type="match status" value="1"/>
</dbReference>
<dbReference type="FunFam" id="3.10.20.310:FF:000005">
    <property type="entry name" value="Outer membrane protein assembly factor BamA"/>
    <property type="match status" value="1"/>
</dbReference>
<dbReference type="Gene3D" id="3.10.20.310">
    <property type="entry name" value="membrane protein fhac"/>
    <property type="match status" value="5"/>
</dbReference>
<dbReference type="Gene3D" id="2.40.160.50">
    <property type="entry name" value="membrane protein fhac: a member of the omp85/tpsb transporter family"/>
    <property type="match status" value="1"/>
</dbReference>
<dbReference type="HAMAP" id="MF_01430">
    <property type="entry name" value="OM_assembly_BamA"/>
    <property type="match status" value="1"/>
</dbReference>
<dbReference type="InterPro" id="IPR000184">
    <property type="entry name" value="Bac_surfAg_D15"/>
</dbReference>
<dbReference type="InterPro" id="IPR010827">
    <property type="entry name" value="BamA/TamA_POTRA"/>
</dbReference>
<dbReference type="InterPro" id="IPR039910">
    <property type="entry name" value="D15-like"/>
</dbReference>
<dbReference type="InterPro" id="IPR023707">
    <property type="entry name" value="OM_assembly_BamA"/>
</dbReference>
<dbReference type="InterPro" id="IPR034746">
    <property type="entry name" value="POTRA"/>
</dbReference>
<dbReference type="NCBIfam" id="TIGR03303">
    <property type="entry name" value="OM_YaeT"/>
    <property type="match status" value="1"/>
</dbReference>
<dbReference type="NCBIfam" id="NF008287">
    <property type="entry name" value="PRK11067.1"/>
    <property type="match status" value="1"/>
</dbReference>
<dbReference type="PANTHER" id="PTHR12815:SF23">
    <property type="entry name" value="OUTER MEMBRANE PROTEIN ASSEMBLY FACTOR BAMA"/>
    <property type="match status" value="1"/>
</dbReference>
<dbReference type="PANTHER" id="PTHR12815">
    <property type="entry name" value="SORTING AND ASSEMBLY MACHINERY SAMM50 PROTEIN FAMILY MEMBER"/>
    <property type="match status" value="1"/>
</dbReference>
<dbReference type="Pfam" id="PF01103">
    <property type="entry name" value="Omp85"/>
    <property type="match status" value="1"/>
</dbReference>
<dbReference type="Pfam" id="PF07244">
    <property type="entry name" value="POTRA"/>
    <property type="match status" value="4"/>
</dbReference>
<dbReference type="PIRSF" id="PIRSF006076">
    <property type="entry name" value="OM_assembly_OMP85"/>
    <property type="match status" value="1"/>
</dbReference>
<dbReference type="PROSITE" id="PS51779">
    <property type="entry name" value="POTRA"/>
    <property type="match status" value="5"/>
</dbReference>